<comment type="function">
    <text evidence="1">Component of the ubiquinol-cytochrome c reductase complex (complex III or cytochrome b-c1 complex) that is part of the mitochondrial respiratory chain. The b-c1 complex mediates electron transfer from ubiquinol to cytochrome c. Contributes to the generation of a proton gradient across the mitochondrial membrane that is then used for ATP synthesis.</text>
</comment>
<comment type="cofactor">
    <cofactor evidence="1">
        <name>heme b</name>
        <dbReference type="ChEBI" id="CHEBI:60344"/>
    </cofactor>
    <text evidence="1">Binds 2 heme b groups non-covalently.</text>
</comment>
<comment type="subunit">
    <text evidence="1">The main subunits of complex b-c1 are: cytochrome b, cytochrome c1 and the Rieske protein.</text>
</comment>
<comment type="subcellular location">
    <subcellularLocation>
        <location evidence="2">Mitochondrion inner membrane</location>
        <topology evidence="2">Multi-pass membrane protein</topology>
    </subcellularLocation>
</comment>
<comment type="similarity">
    <text evidence="4 5">Belongs to the cytochrome b family.</text>
</comment>
<comment type="caution">
    <text evidence="1">The full-length protein contains only eight transmembrane helices, not nine as predicted by bioinformatics tools.</text>
</comment>
<gene>
    <name type="primary">mt:Cyt-b</name>
    <name type="synonym">Cob</name>
    <name type="synonym">cytb</name>
</gene>
<geneLocation type="mitochondrion"/>
<organism>
    <name type="scientific">Bugula neritina</name>
    <name type="common">Brown bryozoan</name>
    <name type="synonym">Sertularia neritina</name>
    <dbReference type="NCBI Taxonomy" id="10212"/>
    <lineage>
        <taxon>Eukaryota</taxon>
        <taxon>Metazoa</taxon>
        <taxon>Spiralia</taxon>
        <taxon>Lophotrochozoa</taxon>
        <taxon>Bryozoa</taxon>
        <taxon>Gymnolaemata</taxon>
        <taxon>Cheilostomatida</taxon>
        <taxon>Flustrina</taxon>
        <taxon>Buguloidea</taxon>
        <taxon>Bugulidae</taxon>
        <taxon>Bugula</taxon>
    </lineage>
</organism>
<sequence length="368" mass="41605">MKNQMMKHNPMGKMANSLIQLACPKNISALWSFGSLLGLCLITQILTGIFLAMFYIPNIYQAFDSAIYISRDVNFGWLIRSIHANSASMFFICIYTHTGRGIYYSSHQMKETWMVGVTLLLITILTAFLGYVLPWGQMSFWAATVITNLLSAIPYLGSTIVNWIWGGFSVSNATLTRFYALHFLFPFLISALSLMHIIFLHQSGSSNPLGLNSNNETMKFHIYFSAKDLIGVILLWIMLGSVVLLKPNLLIDPENFIPANPLVTPTHIQPEWYFLPMYAILRSIPNKLGGVLALIMSIAILYFLPMMNKPITKSASMNPKNKIAFWLLVTNFIVLMWIGSKPVESPFEEIGQIMTVTYFSIYMIMSKN</sequence>
<protein>
    <recommendedName>
        <fullName>Cytochrome b</fullName>
    </recommendedName>
    <alternativeName>
        <fullName>Complex III subunit 3</fullName>
    </alternativeName>
    <alternativeName>
        <fullName>Complex III subunit III</fullName>
    </alternativeName>
    <alternativeName>
        <fullName>Cytochrome b-c1 complex subunit 3</fullName>
    </alternativeName>
    <alternativeName>
        <fullName>Ubiquinol-cytochrome-c reductase complex cytochrome b subunit</fullName>
    </alternativeName>
</protein>
<dbReference type="EMBL" id="AY690838">
    <property type="protein sequence ID" value="AAT79560.1"/>
    <property type="molecule type" value="Genomic_DNA"/>
</dbReference>
<dbReference type="RefSeq" id="YP_001648404.1">
    <property type="nucleotide sequence ID" value="NC_010197.1"/>
</dbReference>
<dbReference type="SMR" id="A9UKA2"/>
<dbReference type="GeneID" id="5846134"/>
<dbReference type="CTD" id="4519"/>
<dbReference type="GO" id="GO:0005743">
    <property type="term" value="C:mitochondrial inner membrane"/>
    <property type="evidence" value="ECO:0007669"/>
    <property type="project" value="UniProtKB-SubCell"/>
</dbReference>
<dbReference type="GO" id="GO:0045275">
    <property type="term" value="C:respiratory chain complex III"/>
    <property type="evidence" value="ECO:0007669"/>
    <property type="project" value="InterPro"/>
</dbReference>
<dbReference type="GO" id="GO:0046872">
    <property type="term" value="F:metal ion binding"/>
    <property type="evidence" value="ECO:0007669"/>
    <property type="project" value="UniProtKB-KW"/>
</dbReference>
<dbReference type="GO" id="GO:0008121">
    <property type="term" value="F:ubiquinol-cytochrome-c reductase activity"/>
    <property type="evidence" value="ECO:0007669"/>
    <property type="project" value="InterPro"/>
</dbReference>
<dbReference type="GO" id="GO:0006122">
    <property type="term" value="P:mitochondrial electron transport, ubiquinol to cytochrome c"/>
    <property type="evidence" value="ECO:0007669"/>
    <property type="project" value="TreeGrafter"/>
</dbReference>
<dbReference type="CDD" id="cd00290">
    <property type="entry name" value="cytochrome_b_C"/>
    <property type="match status" value="1"/>
</dbReference>
<dbReference type="CDD" id="cd00284">
    <property type="entry name" value="Cytochrome_b_N"/>
    <property type="match status" value="1"/>
</dbReference>
<dbReference type="Gene3D" id="1.20.810.10">
    <property type="entry name" value="Cytochrome Bc1 Complex, Chain C"/>
    <property type="match status" value="1"/>
</dbReference>
<dbReference type="InterPro" id="IPR005798">
    <property type="entry name" value="Cyt_b/b6_C"/>
</dbReference>
<dbReference type="InterPro" id="IPR036150">
    <property type="entry name" value="Cyt_b/b6_C_sf"/>
</dbReference>
<dbReference type="InterPro" id="IPR005797">
    <property type="entry name" value="Cyt_b/b6_N"/>
</dbReference>
<dbReference type="InterPro" id="IPR027387">
    <property type="entry name" value="Cytb/b6-like_sf"/>
</dbReference>
<dbReference type="InterPro" id="IPR030689">
    <property type="entry name" value="Cytochrome_b"/>
</dbReference>
<dbReference type="InterPro" id="IPR048260">
    <property type="entry name" value="Cytochrome_b_C_euk/bac"/>
</dbReference>
<dbReference type="InterPro" id="IPR048259">
    <property type="entry name" value="Cytochrome_b_N_euk/bac"/>
</dbReference>
<dbReference type="InterPro" id="IPR016174">
    <property type="entry name" value="Di-haem_cyt_TM"/>
</dbReference>
<dbReference type="PANTHER" id="PTHR19271">
    <property type="entry name" value="CYTOCHROME B"/>
    <property type="match status" value="1"/>
</dbReference>
<dbReference type="PANTHER" id="PTHR19271:SF16">
    <property type="entry name" value="CYTOCHROME B"/>
    <property type="match status" value="1"/>
</dbReference>
<dbReference type="Pfam" id="PF00032">
    <property type="entry name" value="Cytochrom_B_C"/>
    <property type="match status" value="1"/>
</dbReference>
<dbReference type="Pfam" id="PF00033">
    <property type="entry name" value="Cytochrome_B"/>
    <property type="match status" value="1"/>
</dbReference>
<dbReference type="PIRSF" id="PIRSF038885">
    <property type="entry name" value="COB"/>
    <property type="match status" value="1"/>
</dbReference>
<dbReference type="SUPFAM" id="SSF81648">
    <property type="entry name" value="a domain/subunit of cytochrome bc1 complex (Ubiquinol-cytochrome c reductase)"/>
    <property type="match status" value="1"/>
</dbReference>
<dbReference type="SUPFAM" id="SSF81342">
    <property type="entry name" value="Transmembrane di-heme cytochromes"/>
    <property type="match status" value="1"/>
</dbReference>
<dbReference type="PROSITE" id="PS51003">
    <property type="entry name" value="CYTB_CTER"/>
    <property type="match status" value="1"/>
</dbReference>
<dbReference type="PROSITE" id="PS51002">
    <property type="entry name" value="CYTB_NTER"/>
    <property type="match status" value="1"/>
</dbReference>
<keyword id="KW-0249">Electron transport</keyword>
<keyword id="KW-0349">Heme</keyword>
<keyword id="KW-0408">Iron</keyword>
<keyword id="KW-0472">Membrane</keyword>
<keyword id="KW-0479">Metal-binding</keyword>
<keyword id="KW-0496">Mitochondrion</keyword>
<keyword id="KW-0999">Mitochondrion inner membrane</keyword>
<keyword id="KW-0679">Respiratory chain</keyword>
<keyword id="KW-0812">Transmembrane</keyword>
<keyword id="KW-1133">Transmembrane helix</keyword>
<keyword id="KW-0813">Transport</keyword>
<keyword id="KW-0830">Ubiquinone</keyword>
<evidence type="ECO:0000250" key="1">
    <source>
        <dbReference type="UniProtKB" id="P00157"/>
    </source>
</evidence>
<evidence type="ECO:0000250" key="2">
    <source>
        <dbReference type="UniProtKB" id="P00163"/>
    </source>
</evidence>
<evidence type="ECO:0000255" key="3"/>
<evidence type="ECO:0000255" key="4">
    <source>
        <dbReference type="PROSITE-ProRule" id="PRU00967"/>
    </source>
</evidence>
<evidence type="ECO:0000255" key="5">
    <source>
        <dbReference type="PROSITE-ProRule" id="PRU00968"/>
    </source>
</evidence>
<name>CYB_BUGNE</name>
<reference key="1">
    <citation type="submission" date="2004-07" db="EMBL/GenBank/DDBJ databases">
        <authorList>
            <person name="Jang K."/>
        </authorList>
    </citation>
    <scope>NUCLEOTIDE SEQUENCE [GENOMIC DNA]</scope>
</reference>
<accession>A9UKA2</accession>
<proteinExistence type="inferred from homology"/>
<feature type="chain" id="PRO_0000357459" description="Cytochrome b">
    <location>
        <begin position="1"/>
        <end position="368"/>
    </location>
</feature>
<feature type="transmembrane region" description="Helical" evidence="2">
    <location>
        <begin position="33"/>
        <end position="53"/>
    </location>
</feature>
<feature type="transmembrane region" description="Helical" evidence="2">
    <location>
        <begin position="77"/>
        <end position="99"/>
    </location>
</feature>
<feature type="transmembrane region" description="Helical" evidence="2">
    <location>
        <begin position="112"/>
        <end position="132"/>
    </location>
</feature>
<feature type="transmembrane region" description="Helical" evidence="2">
    <location>
        <begin position="178"/>
        <end position="198"/>
    </location>
</feature>
<feature type="transmembrane region" description="Helical" evidence="2">
    <location>
        <begin position="224"/>
        <end position="244"/>
    </location>
</feature>
<feature type="transmembrane region" description="Helical" evidence="3">
    <location>
        <begin position="288"/>
        <end position="308"/>
    </location>
</feature>
<feature type="transmembrane region" description="Helical" evidence="3">
    <location>
        <begin position="323"/>
        <end position="343"/>
    </location>
</feature>
<feature type="transmembrane region" description="Helical" evidence="3">
    <location>
        <begin position="345"/>
        <end position="365"/>
    </location>
</feature>
<feature type="binding site" description="axial binding residue" evidence="1">
    <location>
        <position position="83"/>
    </location>
    <ligand>
        <name>heme b</name>
        <dbReference type="ChEBI" id="CHEBI:60344"/>
        <label>b562</label>
    </ligand>
    <ligandPart>
        <name>Fe</name>
        <dbReference type="ChEBI" id="CHEBI:18248"/>
    </ligandPart>
</feature>
<feature type="binding site" description="axial binding residue" evidence="1">
    <location>
        <position position="97"/>
    </location>
    <ligand>
        <name>heme b</name>
        <dbReference type="ChEBI" id="CHEBI:60344"/>
        <label>b566</label>
    </ligand>
    <ligandPart>
        <name>Fe</name>
        <dbReference type="ChEBI" id="CHEBI:18248"/>
    </ligandPart>
</feature>
<feature type="binding site" description="axial binding residue" evidence="1">
    <location>
        <position position="182"/>
    </location>
    <ligand>
        <name>heme b</name>
        <dbReference type="ChEBI" id="CHEBI:60344"/>
        <label>b562</label>
    </ligand>
    <ligandPart>
        <name>Fe</name>
        <dbReference type="ChEBI" id="CHEBI:18248"/>
    </ligandPart>
</feature>
<feature type="binding site" description="axial binding residue">
    <location>
        <position position="196"/>
    </location>
    <ligand>
        <name>heme b</name>
        <dbReference type="ChEBI" id="CHEBI:60344"/>
        <label>b566</label>
    </ligand>
    <ligandPart>
        <name>Fe</name>
        <dbReference type="ChEBI" id="CHEBI:18248"/>
    </ligandPart>
</feature>
<feature type="binding site" evidence="1">
    <location>
        <position position="201"/>
    </location>
    <ligand>
        <name>a ubiquinone</name>
        <dbReference type="ChEBI" id="CHEBI:16389"/>
    </ligand>
</feature>